<dbReference type="EC" id="2.7.7.93" evidence="1"/>
<dbReference type="EMBL" id="X65195">
    <property type="protein sequence ID" value="CAJ14046.1"/>
    <property type="molecule type" value="Genomic_DNA"/>
</dbReference>
<dbReference type="EMBL" id="AY632421">
    <property type="protein sequence ID" value="AAU00081.1"/>
    <property type="molecule type" value="Genomic_DNA"/>
</dbReference>
<dbReference type="EMBL" id="GG657757">
    <property type="protein sequence ID" value="EFL30519.1"/>
    <property type="molecule type" value="Genomic_DNA"/>
</dbReference>
<dbReference type="RefSeq" id="WP_003988634.1">
    <property type="nucleotide sequence ID" value="NZ_GG657757.1"/>
</dbReference>
<dbReference type="SMR" id="Q5IW36"/>
<dbReference type="STRING" id="591159.SSQG_01037"/>
<dbReference type="KEGG" id="ag:AAU00081"/>
<dbReference type="eggNOG" id="COG1056">
    <property type="taxonomic scope" value="Bacteria"/>
</dbReference>
<dbReference type="HOGENOM" id="CLU_108783_0_0_11"/>
<dbReference type="OrthoDB" id="3249147at2"/>
<dbReference type="BioCyc" id="MetaCyc:MONOMER-15036"/>
<dbReference type="BRENDA" id="2.7.7.93">
    <property type="organism ID" value="6116"/>
</dbReference>
<dbReference type="UniPathway" id="UPA00197"/>
<dbReference type="Proteomes" id="UP000004184">
    <property type="component" value="Unassembled WGS sequence"/>
</dbReference>
<dbReference type="GO" id="GO:0016779">
    <property type="term" value="F:nucleotidyltransferase activity"/>
    <property type="evidence" value="ECO:0007669"/>
    <property type="project" value="UniProtKB-KW"/>
</dbReference>
<dbReference type="GO" id="GO:0017000">
    <property type="term" value="P:antibiotic biosynthetic process"/>
    <property type="evidence" value="ECO:0007669"/>
    <property type="project" value="UniProtKB-KW"/>
</dbReference>
<dbReference type="Gene3D" id="3.40.50.620">
    <property type="entry name" value="HUPs"/>
    <property type="match status" value="1"/>
</dbReference>
<dbReference type="InterPro" id="IPR004821">
    <property type="entry name" value="Cyt_trans-like"/>
</dbReference>
<dbReference type="InterPro" id="IPR014729">
    <property type="entry name" value="Rossmann-like_a/b/a_fold"/>
</dbReference>
<dbReference type="PANTHER" id="PTHR21342:SF0">
    <property type="entry name" value="BIFUNCTIONAL NMN ADENYLYLTRANSFERASE_NUDIX HYDROLASE"/>
    <property type="match status" value="1"/>
</dbReference>
<dbReference type="PANTHER" id="PTHR21342">
    <property type="entry name" value="PHOSPHOPANTETHEINE ADENYLYLTRANSFERASE"/>
    <property type="match status" value="1"/>
</dbReference>
<dbReference type="Pfam" id="PF01467">
    <property type="entry name" value="CTP_transf_like"/>
    <property type="match status" value="1"/>
</dbReference>
<dbReference type="SUPFAM" id="SSF52374">
    <property type="entry name" value="Nucleotidylyl transferase"/>
    <property type="match status" value="1"/>
</dbReference>
<sequence length="184" mass="20787">MSAEQIAGTGVIHGRFQPLHLGHLEYLLAGAERCRTLVVGITNPDPWTTTEETTDPERGLPESNPCTFYERYLMVEGALTEAGVSHERLRIVPFPHSFPERLAHYAPADARYFVTVYDDWGDAKLDRFHALGLRTEVMWRRTDKPVSGGRVRRSIAEGQPWEHLVPPAVARVVKECGIDERIRA</sequence>
<proteinExistence type="evidence at protein level"/>
<protein>
    <recommendedName>
        <fullName evidence="3">Phosphonoformate cytidylyltransferase</fullName>
        <ecNumber evidence="1">2.7.7.93</ecNumber>
    </recommendedName>
</protein>
<feature type="chain" id="PRO_0000453524" description="Phosphonoformate cytidylyltransferase">
    <location>
        <begin position="1"/>
        <end position="184"/>
    </location>
</feature>
<reference key="1">
    <citation type="journal article" date="2004" name="Appl. Environ. Microbiol.">
        <title>Biosynthetic gene cluster of the herbicide phosphinothricin tripeptide from Streptomyces viridochromogenes Tu494.</title>
        <authorList>
            <person name="Schwartz D."/>
            <person name="Berger S."/>
            <person name="Heinzelmann E."/>
            <person name="Muschko K."/>
            <person name="Welzel K."/>
            <person name="Wohlleben W."/>
        </authorList>
    </citation>
    <scope>NUCLEOTIDE SEQUENCE [GENOMIC DNA]</scope>
    <source>
        <strain>DSM 40736 / JCM 4977 / BCRC 1201 / Tue 494</strain>
    </source>
</reference>
<reference key="2">
    <citation type="journal article" date="2005" name="Antimicrob. Agents Chemother.">
        <title>Molecular cloning, sequence analysis, and heterologous expression of the phosphinothricin tripeptide biosynthetic gene cluster from Streptomyces viridochromogenes DSM 40736.</title>
        <authorList>
            <person name="Blodgett J.A."/>
            <person name="Zhang J.K."/>
            <person name="Metcalf W.W."/>
        </authorList>
    </citation>
    <scope>NUCLEOTIDE SEQUENCE [GENOMIC DNA]</scope>
    <source>
        <strain>DSM 40736 / JCM 4977 / BCRC 1201 / Tue 494</strain>
    </source>
</reference>
<reference key="3">
    <citation type="submission" date="2009-02" db="EMBL/GenBank/DDBJ databases">
        <title>Annotation of Streptomyces viridochromogenes strain DSM 40736.</title>
        <authorList>
            <consortium name="The Broad Institute Genome Sequencing Platform"/>
            <consortium name="Broad Institute Microbial Sequencing Center"/>
            <person name="Fischbach M."/>
            <person name="Godfrey P."/>
            <person name="Ward D."/>
            <person name="Young S."/>
            <person name="Zeng Q."/>
            <person name="Koehrsen M."/>
            <person name="Alvarado L."/>
            <person name="Berlin A.M."/>
            <person name="Bochicchio J."/>
            <person name="Borenstein D."/>
            <person name="Chapman S.B."/>
            <person name="Chen Z."/>
            <person name="Engels R."/>
            <person name="Freedman E."/>
            <person name="Gellesch M."/>
            <person name="Goldberg J."/>
            <person name="Griggs A."/>
            <person name="Gujja S."/>
            <person name="Heilman E.R."/>
            <person name="Heiman D.I."/>
            <person name="Hepburn T.A."/>
            <person name="Howarth C."/>
            <person name="Jen D."/>
            <person name="Larson L."/>
            <person name="Lewis B."/>
            <person name="Mehta T."/>
            <person name="Park D."/>
            <person name="Pearson M."/>
            <person name="Richards J."/>
            <person name="Roberts A."/>
            <person name="Saif S."/>
            <person name="Shea T.D."/>
            <person name="Shenoy N."/>
            <person name="Sisk P."/>
            <person name="Stolte C."/>
            <person name="Sykes S.N."/>
            <person name="Thomson T."/>
            <person name="Walk T."/>
            <person name="White J."/>
            <person name="Yandava C."/>
            <person name="Straight P."/>
            <person name="Clardy J."/>
            <person name="Hung D."/>
            <person name="Kolter R."/>
            <person name="Mekalanos J."/>
            <person name="Walker S."/>
            <person name="Walsh C.T."/>
            <person name="Wieland-Brown L.C."/>
            <person name="Haas B."/>
            <person name="Nusbaum C."/>
            <person name="Birren B."/>
        </authorList>
    </citation>
    <scope>NUCLEOTIDE SEQUENCE [LARGE SCALE GENOMIC DNA]</scope>
    <source>
        <strain>DSM 40736 / JCM 4977 / BCRC 1201 / Tue 494</strain>
    </source>
</reference>
<reference key="4">
    <citation type="journal article" date="2007" name="Nat. Chem. Biol.">
        <title>Unusual transformations in the biosynthesis of the antibiotic phosphinothricin tripeptide.</title>
        <authorList>
            <person name="Blodgett J.A."/>
            <person name="Thomas P.M."/>
            <person name="Li G."/>
            <person name="Velasquez J.E."/>
            <person name="van der Donk W.A."/>
            <person name="Kelleher N.L."/>
            <person name="Metcalf W.W."/>
        </authorList>
    </citation>
    <scope>FUNCTION</scope>
    <scope>CATALYTIC ACTIVITY</scope>
    <scope>PATHWAY</scope>
    <scope>DISRUPTION PHENOTYPE</scope>
    <source>
        <strain>DSM 40736 / JCM 4977 / BCRC 1201 / Tue 494</strain>
    </source>
</reference>
<keyword id="KW-0045">Antibiotic biosynthesis</keyword>
<keyword id="KW-0548">Nucleotidyltransferase</keyword>
<keyword id="KW-1185">Reference proteome</keyword>
<keyword id="KW-0808">Transferase</keyword>
<organism>
    <name type="scientific">Streptomyces viridochromogenes (strain DSM 40736 / JCM 4977 / BCRC 1201 / Tue 494)</name>
    <dbReference type="NCBI Taxonomy" id="591159"/>
    <lineage>
        <taxon>Bacteria</taxon>
        <taxon>Bacillati</taxon>
        <taxon>Actinomycetota</taxon>
        <taxon>Actinomycetes</taxon>
        <taxon>Kitasatosporales</taxon>
        <taxon>Streptomycetaceae</taxon>
        <taxon>Streptomyces</taxon>
    </lineage>
</organism>
<evidence type="ECO:0000269" key="1">
    <source>
    </source>
</evidence>
<evidence type="ECO:0000303" key="2">
    <source>
    </source>
</evidence>
<evidence type="ECO:0000305" key="3"/>
<evidence type="ECO:0000305" key="4">
    <source>
    </source>
</evidence>
<evidence type="ECO:0000312" key="5">
    <source>
        <dbReference type="EMBL" id="EFL30519.1"/>
    </source>
</evidence>
<accession>Q5IW36</accession>
<accession>D9XF40</accession>
<gene>
    <name evidence="2" type="primary">phpF</name>
    <name evidence="5" type="ORF">SSQG_01037</name>
</gene>
<comment type="function">
    <text evidence="1">Catalyzes the displacement of the beta- and gamma-phosphates of CTP by phosphonoformate to produce CMP-5'-phosphonoformate, an intermediate in the biosynthesis of phosphinothricin tripeptide (PTT), also known as bialaphos (BA), a natural-product antibiotic and potent herbicide.</text>
</comment>
<comment type="catalytic activity">
    <reaction evidence="1">
        <text>phosphonoformate + CTP = CMP-5'-phosphonoformate + diphosphate</text>
        <dbReference type="Rhea" id="RHEA:49428"/>
        <dbReference type="ChEBI" id="CHEBI:33019"/>
        <dbReference type="ChEBI" id="CHEBI:37563"/>
        <dbReference type="ChEBI" id="CHEBI:91254"/>
        <dbReference type="ChEBI" id="CHEBI:91255"/>
        <dbReference type="EC" id="2.7.7.93"/>
    </reaction>
</comment>
<comment type="pathway">
    <text evidence="1 4">Secondary metabolite biosynthesis; bialaphos biosynthesis.</text>
</comment>
<comment type="disruption phenotype">
    <text evidence="1">Deletion mutant is unable to produce PTT when grown in MYG broth supplemented with 0.5 mM phosphonoformate.</text>
</comment>
<name>PHPF_STRVT</name>